<proteinExistence type="evidence at protein level"/>
<gene>
    <name evidence="20" type="primary">Slc15a4</name>
    <name evidence="17" type="synonym">Pht1</name>
</gene>
<keyword id="KW-0967">Endosome</keyword>
<keyword id="KW-0391">Immunity</keyword>
<keyword id="KW-0399">Innate immunity</keyword>
<keyword id="KW-0458">Lysosome</keyword>
<keyword id="KW-0472">Membrane</keyword>
<keyword id="KW-0571">Peptide transport</keyword>
<keyword id="KW-0597">Phosphoprotein</keyword>
<keyword id="KW-0653">Protein transport</keyword>
<keyword id="KW-1185">Reference proteome</keyword>
<keyword id="KW-0769">Symport</keyword>
<keyword id="KW-0812">Transmembrane</keyword>
<keyword id="KW-1133">Transmembrane helix</keyword>
<keyword id="KW-0813">Transport</keyword>
<name>S15A4_MOUSE</name>
<evidence type="ECO:0000250" key="1">
    <source>
        <dbReference type="UniProtKB" id="O09014"/>
    </source>
</evidence>
<evidence type="ECO:0000250" key="2">
    <source>
        <dbReference type="UniProtKB" id="Q8N697"/>
    </source>
</evidence>
<evidence type="ECO:0000255" key="3"/>
<evidence type="ECO:0000269" key="4">
    <source>
    </source>
</evidence>
<evidence type="ECO:0000269" key="5">
    <source>
    </source>
</evidence>
<evidence type="ECO:0000269" key="6">
    <source>
    </source>
</evidence>
<evidence type="ECO:0000269" key="7">
    <source>
    </source>
</evidence>
<evidence type="ECO:0000269" key="8">
    <source>
    </source>
</evidence>
<evidence type="ECO:0000269" key="9">
    <source>
    </source>
</evidence>
<evidence type="ECO:0000269" key="10">
    <source>
    </source>
</evidence>
<evidence type="ECO:0000269" key="11">
    <source>
    </source>
</evidence>
<evidence type="ECO:0000269" key="12">
    <source>
    </source>
</evidence>
<evidence type="ECO:0000269" key="13">
    <source>
    </source>
</evidence>
<evidence type="ECO:0000269" key="14">
    <source>
    </source>
</evidence>
<evidence type="ECO:0000269" key="15">
    <source>
    </source>
</evidence>
<evidence type="ECO:0000269" key="16">
    <source>
    </source>
</evidence>
<evidence type="ECO:0000303" key="17">
    <source ref="1"/>
</evidence>
<evidence type="ECO:0000305" key="18"/>
<evidence type="ECO:0000305" key="19">
    <source>
    </source>
</evidence>
<evidence type="ECO:0000312" key="20">
    <source>
        <dbReference type="MGI" id="MGI:2140796"/>
    </source>
</evidence>
<evidence type="ECO:0007744" key="21">
    <source>
    </source>
</evidence>
<evidence type="ECO:0007744" key="22">
    <source>
    </source>
</evidence>
<accession>Q91W98</accession>
<accession>Q7TPL5</accession>
<feature type="chain" id="PRO_0000338600" description="Solute carrier family 15 member 4">
    <location>
        <begin position="1"/>
        <end position="574"/>
    </location>
</feature>
<feature type="transmembrane region" description="Helical" evidence="3">
    <location>
        <begin position="42"/>
        <end position="62"/>
    </location>
</feature>
<feature type="transmembrane region" description="Helical" evidence="3">
    <location>
        <begin position="69"/>
        <end position="89"/>
    </location>
</feature>
<feature type="transmembrane region" description="Helical" evidence="3">
    <location>
        <begin position="98"/>
        <end position="118"/>
    </location>
</feature>
<feature type="transmembrane region" description="Helical" evidence="3">
    <location>
        <begin position="161"/>
        <end position="181"/>
    </location>
</feature>
<feature type="transmembrane region" description="Helical" evidence="3">
    <location>
        <begin position="197"/>
        <end position="217"/>
    </location>
</feature>
<feature type="transmembrane region" description="Helical" evidence="3">
    <location>
        <begin position="225"/>
        <end position="245"/>
    </location>
</feature>
<feature type="transmembrane region" description="Helical" evidence="3">
    <location>
        <begin position="319"/>
        <end position="339"/>
    </location>
</feature>
<feature type="transmembrane region" description="Helical" evidence="3">
    <location>
        <begin position="364"/>
        <end position="384"/>
    </location>
</feature>
<feature type="transmembrane region" description="Helical" evidence="3">
    <location>
        <begin position="406"/>
        <end position="426"/>
    </location>
</feature>
<feature type="transmembrane region" description="Helical" evidence="3">
    <location>
        <begin position="460"/>
        <end position="480"/>
    </location>
</feature>
<feature type="transmembrane region" description="Helical" evidence="3">
    <location>
        <begin position="491"/>
        <end position="511"/>
    </location>
</feature>
<feature type="transmembrane region" description="Helical" evidence="3">
    <location>
        <begin position="536"/>
        <end position="556"/>
    </location>
</feature>
<feature type="modified residue" description="Phosphoserine" evidence="21 22">
    <location>
        <position position="281"/>
    </location>
</feature>
<feature type="modified residue" description="Phosphoserine" evidence="21">
    <location>
        <position position="299"/>
    </location>
</feature>
<feature type="sequence conflict" description="In Ref. 1; AAK95566." evidence="18" ref="1">
    <original>Y</original>
    <variation>I</variation>
    <location>
        <position position="218"/>
    </location>
</feature>
<feature type="sequence conflict" description="In Ref. 1; AAK95566." evidence="18" ref="1">
    <original>P</original>
    <variation>L</variation>
    <location>
        <position position="254"/>
    </location>
</feature>
<feature type="sequence conflict" description="In Ref. 1; AAK95566." evidence="18" ref="1">
    <original>S</original>
    <variation>G</variation>
    <location>
        <position position="258"/>
    </location>
</feature>
<feature type="sequence conflict" description="In Ref. 1; AAK95566." evidence="18" ref="1">
    <original>S</original>
    <variation>N</variation>
    <location>
        <position position="347"/>
    </location>
</feature>
<feature type="sequence conflict" description="In Ref. 1; AAK95566." evidence="18" ref="1">
    <original>R</original>
    <variation>K</variation>
    <location>
        <position position="427"/>
    </location>
</feature>
<feature type="sequence conflict" description="In Ref. 1; AAK95566." evidence="18" ref="1">
    <original>Y</original>
    <variation>F</variation>
    <location>
        <position position="445"/>
    </location>
</feature>
<feature type="sequence conflict" description="In Ref. 1; AAK95566." evidence="18" ref="1">
    <original>P</original>
    <variation>L</variation>
    <location>
        <position position="457"/>
    </location>
</feature>
<feature type="sequence conflict" description="In Ref. 1; AAK95566." evidence="18" ref="1">
    <original>GL</original>
    <variation>RQ</variation>
    <location>
        <begin position="473"/>
        <end position="474"/>
    </location>
</feature>
<feature type="sequence conflict" description="In Ref. 1; AAK95566." evidence="18" ref="1">
    <original>G</original>
    <variation>C</variation>
    <location>
        <position position="498"/>
    </location>
</feature>
<sequence length="574" mass="62256">MEGERAPLLGSRRPAVSAASAVFAGRRAACGAVLLAELLERAAFYGVTANLVLFLNGAPFDWEGAQASQALLLFMGLTYLGSPFGGWLADARLGRARAILLSLALYLLGLLAFPLLAAPRSRSFLCGDPRPELVRNCSAPFPNGSASCPENAARRCAPATFAGLVLVGLGVATVKANITPFGADQVKDRGPEATRRFFNWFYWSINLGAILSLGGIAYIQQNVSFFTGYLIPTVCVAIAFLVFLCGQSVFITKPPDGSAFTDMFRILTYSCCSQRGGQRRSGEGLGVFQQSSKHSLFDSCKMSRGGPFTEDKVEDVKALVKIVPVFLALIPYWTVYFQMQTTYALQSLHLKIPEISSITTTHHTLPAAWLTMFDAVLILLLIPLKDKLVDPVLRRHGLLPSSLKRIAVGMFFVMCSAFAAGILESKRLDLVKEKTINQTIGGVVYHAADLPIWWQIPQYVLIGISEIFASIAGLEFAYSAAPKSMQSAIMGLFFFFSGIGSFVGSGLLALVSLKAIGWMSSHTDFGNINSCHLHYYFFLLAAIQGATLLLFLIVSVKYDRQRARTDGGPASTRT</sequence>
<organism>
    <name type="scientific">Mus musculus</name>
    <name type="common">Mouse</name>
    <dbReference type="NCBI Taxonomy" id="10090"/>
    <lineage>
        <taxon>Eukaryota</taxon>
        <taxon>Metazoa</taxon>
        <taxon>Chordata</taxon>
        <taxon>Craniata</taxon>
        <taxon>Vertebrata</taxon>
        <taxon>Euteleostomi</taxon>
        <taxon>Mammalia</taxon>
        <taxon>Eutheria</taxon>
        <taxon>Euarchontoglires</taxon>
        <taxon>Glires</taxon>
        <taxon>Rodentia</taxon>
        <taxon>Myomorpha</taxon>
        <taxon>Muroidea</taxon>
        <taxon>Muridae</taxon>
        <taxon>Murinae</taxon>
        <taxon>Mus</taxon>
        <taxon>Mus</taxon>
    </lineage>
</organism>
<comment type="function">
    <text evidence="1 2 4 5 6 7 8 9 10 11 12 13 14 15 16">Proton-coupled amino-acid transporter that mediates the transmembrane transport of L-histidine and some di- and tripeptides from inside the lysosome to the cytosol, and plays a key role in innate immune response (PubMed:19570976, PubMed:21277849, PubMed:25238095, PubMed:27845049, PubMed:29305823). Able to transport a variety of di- and tripeptides, including carnosine and some peptidoglycans (PubMed:29784761). Transporter activity is pH-dependent and maximized in the acidic lysosomal environment (By similarity). Involved in the detection of microbial pathogens by toll-like receptors (TLRs) and NOD-like receptors (NLRs), probably by mediating transport of bacterial peptidoglycans across the endolysosomal membrane: catalyzes the transport of certain bacterial peptidoglycans, such as muramyl dipeptide (MDP), the NOD2 ligand, and L-alanyl-gamma-D-glutamyl-meso-2,6-diaminoheptanedioate (tri-DAP), the NOD1 ligand (PubMed:19570976, PubMed:23028315, PubMed:24695226, PubMed:25238095, PubMed:29784761). Required for TLR7, TLR8 and TLR9-mediated type I interferon (IFN-I) productions in plasmacytoid dendritic cells (pDCs) (PubMed:21045126, PubMed:23382217, PubMed:25238095, PubMed:30262916). Independently of its transporter activity, also promotes the recruitment of innate immune adapter TASL to endolysosome downstream of TLR7, TLR8 and TLR9: TASL recruitment leads to the specific recruitment and activation of IRF5 (By similarity). Required for isotype class switch recombination to IgG2c isotype in response to TLR9 stimulation (PubMed:25310967). Required for mast cell secretory-granule homeostasis by limiting mast cell functions and inflammatory responses (PubMed:29155995).</text>
</comment>
<comment type="catalytic activity">
    <reaction evidence="6 12 15">
        <text>L-histidine(out) + n H(+)(out) = L-histidine(in) + n H(+)(in)</text>
        <dbReference type="Rhea" id="RHEA:76379"/>
        <dbReference type="ChEBI" id="CHEBI:15378"/>
        <dbReference type="ChEBI" id="CHEBI:57595"/>
    </reaction>
    <physiologicalReaction direction="left-to-right" evidence="19">
        <dbReference type="Rhea" id="RHEA:76380"/>
    </physiologicalReaction>
</comment>
<comment type="catalytic activity">
    <reaction evidence="15">
        <text>N-acetyl-D-muramoyl-L-alanyl-D-isoglutamine(out) + n H(+)(out) = N-acetyl-D-muramoyl-L-alanyl-D-isoglutamine(in) + n H(+)(in)</text>
        <dbReference type="Rhea" id="RHEA:76371"/>
        <dbReference type="ChEBI" id="CHEBI:15378"/>
        <dbReference type="ChEBI" id="CHEBI:155830"/>
    </reaction>
    <physiologicalReaction direction="left-to-right" evidence="2">
        <dbReference type="Rhea" id="RHEA:76372"/>
    </physiologicalReaction>
</comment>
<comment type="catalytic activity">
    <reaction evidence="2">
        <text>L-alanyl-gamma-D-glutamyl-meso-2,6-diaminopimelate(out) + n H(+)(out) = L-alanyl-gamma-D-glutamyl-meso-2,6-diaminopimelate(in) + n H(+)(in)</text>
        <dbReference type="Rhea" id="RHEA:64412"/>
        <dbReference type="ChEBI" id="CHEBI:15378"/>
        <dbReference type="ChEBI" id="CHEBI:61401"/>
    </reaction>
    <physiologicalReaction direction="left-to-right" evidence="2">
        <dbReference type="Rhea" id="RHEA:64413"/>
    </physiologicalReaction>
</comment>
<comment type="catalytic activity">
    <reaction evidence="2">
        <text>glycylglycylglycine(out) + n H(+)(out) = glycylglycylglycine(in) + n H(+)(in)</text>
        <dbReference type="Rhea" id="RHEA:76391"/>
        <dbReference type="ChEBI" id="CHEBI:15378"/>
        <dbReference type="ChEBI" id="CHEBI:195214"/>
    </reaction>
    <physiologicalReaction direction="left-to-right" evidence="2">
        <dbReference type="Rhea" id="RHEA:76392"/>
    </physiologicalReaction>
</comment>
<comment type="catalytic activity">
    <reaction evidence="2">
        <text>carnosine(out) + n H(+)(out) = carnosine(in) + n H(+)(in)</text>
        <dbReference type="Rhea" id="RHEA:76383"/>
        <dbReference type="ChEBI" id="CHEBI:15378"/>
        <dbReference type="ChEBI" id="CHEBI:57485"/>
    </reaction>
    <physiologicalReaction direction="left-to-right" evidence="2">
        <dbReference type="Rhea" id="RHEA:76384"/>
    </physiologicalReaction>
</comment>
<comment type="subunit">
    <text evidence="2">Interacts with TASL; leading to TASL recruitment to endolysosome.</text>
</comment>
<comment type="subcellular location">
    <subcellularLocation>
        <location evidence="6 9 13">Lysosome membrane</location>
        <topology evidence="3">Multi-pass membrane protein</topology>
    </subcellularLocation>
    <subcellularLocation>
        <location evidence="9 15">Endosome membrane</location>
        <topology evidence="3">Multi-pass membrane protein</topology>
    </subcellularLocation>
    <subcellularLocation>
        <location evidence="4">Early endosome membrane</location>
        <topology evidence="3">Multi-pass membrane protein</topology>
    </subcellularLocation>
</comment>
<comment type="tissue specificity">
    <text evidence="6 15">Preferentially expressed in immune tissues, including B-cells and dendritic cells (PubMed:21277849). Highly expressed in macrophages (PubMed:29784761).</text>
</comment>
<comment type="disruption phenotype">
    <text evidence="6 12">Mice are fertile and look healthy but display impaired cytokine production in dendritic cells (PubMed:21277849). Reduced uptake of L-histidine in brain (PubMed:27845049).</text>
</comment>
<comment type="similarity">
    <text evidence="18">Belongs to the major facilitator superfamily. Proton-dependent oligopeptide transporter (POT/PTR) (TC 2.A.17) family.</text>
</comment>
<comment type="sequence caution" evidence="18">
    <conflict type="frameshift">
        <sequence resource="EMBL-CDS" id="AAK95566"/>
    </conflict>
</comment>
<reference key="1">
    <citation type="submission" date="2001-08" db="EMBL/GenBank/DDBJ databases">
        <title>Cloning of a mouse gene encoding a product of peptide/histidine.</title>
        <authorList>
            <person name="Guo J.H."/>
            <person name="Yu L."/>
        </authorList>
    </citation>
    <scope>NUCLEOTIDE SEQUENCE [MRNA]</scope>
</reference>
<reference key="2">
    <citation type="journal article" date="2004" name="Genome Res.">
        <title>The status, quality, and expansion of the NIH full-length cDNA project: the Mammalian Gene Collection (MGC).</title>
        <authorList>
            <consortium name="The MGC Project Team"/>
        </authorList>
    </citation>
    <scope>NUCLEOTIDE SEQUENCE [LARGE SCALE MRNA]</scope>
    <source>
        <tissue>Eye</tissue>
    </source>
</reference>
<reference key="3">
    <citation type="journal article" date="2009" name="Immunity">
        <title>The phagosomal proteome in interferon-gamma-activated macrophages.</title>
        <authorList>
            <person name="Trost M."/>
            <person name="English L."/>
            <person name="Lemieux S."/>
            <person name="Courcelles M."/>
            <person name="Desjardins M."/>
            <person name="Thibault P."/>
        </authorList>
    </citation>
    <scope>PHOSPHORYLATION [LARGE SCALE ANALYSIS] AT SER-281 AND SER-299</scope>
    <scope>IDENTIFICATION BY MASS SPECTROMETRY [LARGE SCALE ANALYSIS]</scope>
</reference>
<reference key="4">
    <citation type="journal article" date="2009" name="J. Biol. Chem.">
        <title>pH-dependent internalization of muramyl peptides from early endosomes enables Nod1 and Nod2 signaling.</title>
        <authorList>
            <person name="Lee J."/>
            <person name="Tattoli I."/>
            <person name="Wojtal K.A."/>
            <person name="Vavricka S.R."/>
            <person name="Philpott D.J."/>
            <person name="Girardin S.E."/>
        </authorList>
    </citation>
    <scope>FUNCTION</scope>
    <scope>SUBCELLULAR LOCATION</scope>
</reference>
<reference key="5">
    <citation type="journal article" date="2010" name="Cell">
        <title>A tissue-specific atlas of mouse protein phosphorylation and expression.</title>
        <authorList>
            <person name="Huttlin E.L."/>
            <person name="Jedrychowski M.P."/>
            <person name="Elias J.E."/>
            <person name="Goswami T."/>
            <person name="Rad R."/>
            <person name="Beausoleil S.A."/>
            <person name="Villen J."/>
            <person name="Haas W."/>
            <person name="Sowa M.E."/>
            <person name="Gygi S.P."/>
        </authorList>
    </citation>
    <scope>PHOSPHORYLATION [LARGE SCALE ANALYSIS] AT SER-281</scope>
    <scope>IDENTIFICATION BY MASS SPECTROMETRY [LARGE SCALE ANALYSIS]</scope>
    <source>
        <tissue>Brown adipose tissue</tissue>
        <tissue>Testis</tissue>
    </source>
</reference>
<reference key="6">
    <citation type="journal article" date="2010" name="Proc. Natl. Acad. Sci. U.S.A.">
        <title>Slc15a4, AP-3, and Hermansky-Pudlak syndrome proteins are required for Toll-like receptor signaling in plasmacytoid dendritic cells.</title>
        <authorList>
            <person name="Blasius A.L."/>
            <person name="Arnold C.N."/>
            <person name="Georgel P."/>
            <person name="Rutschmann S."/>
            <person name="Xia Y."/>
            <person name="Lin P."/>
            <person name="Ross C."/>
            <person name="Li X."/>
            <person name="Smart N.G."/>
            <person name="Beutler B."/>
        </authorList>
    </citation>
    <scope>FUNCTION</scope>
</reference>
<reference key="7">
    <citation type="journal article" date="2011" name="Gastroenterology">
        <title>The solute carrier family 15A4 regulates TLR9 and NOD1 functions in the innate immune system and promotes colitis in mice.</title>
        <authorList>
            <person name="Sasawatari S."/>
            <person name="Okamura T."/>
            <person name="Kasumi E."/>
            <person name="Tanaka-Furuyama K."/>
            <person name="Yanobu-Takanashi R."/>
            <person name="Shirasawa S."/>
            <person name="Kato N."/>
            <person name="Toyama-Sorimachi N."/>
        </authorList>
    </citation>
    <scope>FUNCTION</scope>
    <scope>SUBCELLULAR LOCATION</scope>
    <scope>TISSUE SPECIFICITY</scope>
    <scope>DISRUPTION PHENOTYPE</scope>
</reference>
<reference key="8">
    <citation type="journal article" date="2012" name="PLoS Pathog.">
        <title>Slc15a4, a gene required for pDC sensing of TLR ligands, is required to control persistent viral infection.</title>
        <authorList>
            <person name="Blasius A.L."/>
            <person name="Krebs P."/>
            <person name="Sullivan B.M."/>
            <person name="Oldstone M.B."/>
            <person name="Popkin D.L."/>
        </authorList>
    </citation>
    <scope>FUNCTION</scope>
</reference>
<reference key="9">
    <citation type="journal article" date="2013" name="Proc. Natl. Acad. Sci. U.S.A.">
        <title>Essential requirement for IRF8 and SLC15A4 implicates plasmacytoid dendritic cells in the pathogenesis of lupus.</title>
        <authorList>
            <person name="Baccala R."/>
            <person name="Gonzalez-Quintial R."/>
            <person name="Blasius A.L."/>
            <person name="Rimann I."/>
            <person name="Ozato K."/>
            <person name="Kono D.H."/>
            <person name="Beutler B."/>
            <person name="Theofilopoulos A.N."/>
        </authorList>
    </citation>
    <scope>FUNCTION</scope>
</reference>
<reference key="10">
    <citation type="journal article" date="2014" name="Immunity">
        <title>The histidine transporter SLC15A4 coordinates mTOR-dependent inflammatory responses and pathogenic antibody production.</title>
        <authorList>
            <person name="Kobayashi T."/>
            <person name="Shimabukuro-Demoto S."/>
            <person name="Yoshida-Sugitani R."/>
            <person name="Furuyama-Tanaka K."/>
            <person name="Karyu H."/>
            <person name="Sugiura Y."/>
            <person name="Shimizu Y."/>
            <person name="Hosaka T."/>
            <person name="Goto M."/>
            <person name="Kato N."/>
            <person name="Okamura T."/>
            <person name="Suematsu M."/>
            <person name="Yokoyama S."/>
            <person name="Toyama-Sorimachi N."/>
        </authorList>
    </citation>
    <scope>FUNCTION</scope>
    <scope>TRANSPORTER ACTIVITY</scope>
</reference>
<reference key="11">
    <citation type="journal article" date="2014" name="Nature">
        <title>Endosomes are specialized platforms for bacterial sensing and NOD2 signalling.</title>
        <authorList>
            <person name="Nakamura N."/>
            <person name="Lill J.R."/>
            <person name="Phung Q."/>
            <person name="Jiang Z."/>
            <person name="Bakalarski C."/>
            <person name="de Maziere A."/>
            <person name="Klumperman J."/>
            <person name="Schlatter M."/>
            <person name="Delamarre L."/>
            <person name="Mellman I."/>
        </authorList>
    </citation>
    <scope>FUNCTION</scope>
    <scope>SUBCELLULAR LOCATION</scope>
</reference>
<reference key="12">
    <citation type="journal article" date="2015" name="Immunol. Cell Biol.">
        <title>Slc15a4 function is required for intact class switch recombination to IgG2c in response to TLR9 stimulation.</title>
        <authorList>
            <person name="Dosenovic P."/>
            <person name="Adori M."/>
            <person name="Adams W.C."/>
            <person name="Pedersen G.K."/>
            <person name="Soldemo M."/>
            <person name="Beutler B."/>
            <person name="Karlsson Hedestam G.B."/>
        </authorList>
    </citation>
    <scope>FUNCTION</scope>
</reference>
<reference key="13">
    <citation type="journal article" date="2017" name="Biochem. Pharmacol.">
        <title>A novel role for PHT1 in the disposition of l-histidine in brain: In vitro slice and in vivo pharmacokinetic studies in wildtype and Pht1 null mice.</title>
        <authorList>
            <person name="Wang X.X."/>
            <person name="Hu Y."/>
            <person name="Keep R.F."/>
            <person name="Toyama-Sorimachi N."/>
            <person name="Smith D.E."/>
        </authorList>
    </citation>
    <scope>FUNCTION</scope>
    <scope>TRANSPORTER ACTIVITY</scope>
    <scope>DISRUPTION PHENOTYPE</scope>
</reference>
<reference key="14">
    <citation type="journal article" date="2017" name="Int. Immunol.">
        <title>Lysosome biogenesis regulated by the amino-acid transporter SLC15A4 is critical for functional integrity of mast cells.</title>
        <authorList>
            <person name="Kobayashi T."/>
            <person name="Tsutsui H."/>
            <person name="Shimabukuro-Demoto S."/>
            <person name="Yoshida-Sugitani R."/>
            <person name="Karyu H."/>
            <person name="Furuyama-Tanaka K."/>
            <person name="Ohshima D."/>
            <person name="Kato N."/>
            <person name="Okamura T."/>
            <person name="Toyama-Sorimachi N."/>
        </authorList>
    </citation>
    <scope>FUNCTION</scope>
    <scope>SUBCELLULAR LOCATION</scope>
</reference>
<reference key="15">
    <citation type="journal article" date="2018" name="J. Immunol.">
        <title>SLC15A2 and SLC15A4 mediate the transport of bacterially derived di/tripeptides to enhance the nucleotide-binding oligomerization domain-dependent immune response in mouse bone marrow-derived macrophages.</title>
        <authorList>
            <person name="Hu Y."/>
            <person name="Song F."/>
            <person name="Jiang H."/>
            <person name="Nunez G."/>
            <person name="Smith D.E."/>
        </authorList>
    </citation>
    <scope>FUNCTION</scope>
    <scope>TRANSPORTER ACTIVITY</scope>
    <scope>SUBCELLULAR LOCATION</scope>
    <scope>TISSUE SPECIFICITY</scope>
</reference>
<reference key="16">
    <citation type="journal article" date="2018" name="Pharm. Res.">
        <title>Semi-mechanistic population pharmacokinetic modeling of L-histidine disposition and brain uptake in wildtype and Pht1 null mice.</title>
        <authorList>
            <person name="Wang X.X."/>
            <person name="Li Y.B."/>
            <person name="Feng M.R."/>
            <person name="Smith D.E."/>
        </authorList>
    </citation>
    <scope>FUNCTION</scope>
</reference>
<reference key="17">
    <citation type="journal article" date="2018" name="Sci. Rep.">
        <title>A requirement for slc15a4 in imiquimod-induced systemic inflammation and psoriasiform inflammation in mice.</title>
        <authorList>
            <person name="Griffith A.D."/>
            <person name="Zaidi A.K."/>
            <person name="Pietro A."/>
            <person name="Hadiono M."/>
            <person name="Yang J.S."/>
            <person name="Davis R."/>
            <person name="Popkin D.L."/>
        </authorList>
    </citation>
    <scope>FUNCTION</scope>
</reference>
<protein>
    <recommendedName>
        <fullName evidence="18">Solute carrier family 15 member 4</fullName>
    </recommendedName>
    <alternativeName>
        <fullName evidence="17">Peptide/histidine transporter 1</fullName>
    </alternativeName>
</protein>
<dbReference type="EMBL" id="AY050630">
    <property type="protein sequence ID" value="AAK95566.1"/>
    <property type="status" value="ALT_FRAME"/>
    <property type="molecule type" value="mRNA"/>
</dbReference>
<dbReference type="EMBL" id="BC016233">
    <property type="protein sequence ID" value="AAH16233.1"/>
    <property type="molecule type" value="mRNA"/>
</dbReference>
<dbReference type="CCDS" id="CCDS19688.1"/>
<dbReference type="RefSeq" id="NP_598656.1">
    <property type="nucleotide sequence ID" value="NM_133895.1"/>
</dbReference>
<dbReference type="SMR" id="Q91W98"/>
<dbReference type="BioGRID" id="221489">
    <property type="interactions" value="2"/>
</dbReference>
<dbReference type="FunCoup" id="Q91W98">
    <property type="interactions" value="1823"/>
</dbReference>
<dbReference type="IntAct" id="Q91W98">
    <property type="interactions" value="1"/>
</dbReference>
<dbReference type="STRING" id="10090.ENSMUSP00000031367"/>
<dbReference type="GlyGen" id="Q91W98">
    <property type="glycosylation" value="2 sites, 1 N-linked glycan (1 site), 1 O-linked glycan (1 site)"/>
</dbReference>
<dbReference type="iPTMnet" id="Q91W98"/>
<dbReference type="PhosphoSitePlus" id="Q91W98"/>
<dbReference type="SwissPalm" id="Q91W98"/>
<dbReference type="jPOST" id="Q91W98"/>
<dbReference type="PaxDb" id="10090-ENSMUSP00000031367"/>
<dbReference type="PeptideAtlas" id="Q91W98"/>
<dbReference type="ProteomicsDB" id="260970"/>
<dbReference type="Pumba" id="Q91W98"/>
<dbReference type="Antibodypedia" id="3084">
    <property type="antibodies" value="58 antibodies from 16 providers"/>
</dbReference>
<dbReference type="DNASU" id="100561"/>
<dbReference type="Ensembl" id="ENSMUST00000031367.15">
    <property type="protein sequence ID" value="ENSMUSP00000031367.9"/>
    <property type="gene ID" value="ENSMUSG00000029416.18"/>
</dbReference>
<dbReference type="GeneID" id="100561"/>
<dbReference type="KEGG" id="mmu:100561"/>
<dbReference type="UCSC" id="uc008zsb.1">
    <property type="organism name" value="mouse"/>
</dbReference>
<dbReference type="AGR" id="MGI:2140796"/>
<dbReference type="CTD" id="121260"/>
<dbReference type="MGI" id="MGI:2140796">
    <property type="gene designation" value="Slc15a4"/>
</dbReference>
<dbReference type="VEuPathDB" id="HostDB:ENSMUSG00000029416"/>
<dbReference type="eggNOG" id="KOG1237">
    <property type="taxonomic scope" value="Eukaryota"/>
</dbReference>
<dbReference type="GeneTree" id="ENSGT00940000159361"/>
<dbReference type="HOGENOM" id="CLU_009313_6_1_1"/>
<dbReference type="InParanoid" id="Q91W98"/>
<dbReference type="OMA" id="QMMGVWF"/>
<dbReference type="OrthoDB" id="8904098at2759"/>
<dbReference type="PhylomeDB" id="Q91W98"/>
<dbReference type="TreeFam" id="TF330897"/>
<dbReference type="Reactome" id="R-MMU-427975">
    <property type="pathway name" value="Proton/oligopeptide cotransporters"/>
</dbReference>
<dbReference type="Reactome" id="R-MMU-6798695">
    <property type="pathway name" value="Neutrophil degranulation"/>
</dbReference>
<dbReference type="Reactome" id="R-MMU-9860276">
    <property type="pathway name" value="SLC15A4:TASL-dependent IRF5 activation"/>
</dbReference>
<dbReference type="BioGRID-ORCS" id="100561">
    <property type="hits" value="2 hits in 77 CRISPR screens"/>
</dbReference>
<dbReference type="ChiTaRS" id="Slc15a4">
    <property type="organism name" value="mouse"/>
</dbReference>
<dbReference type="PRO" id="PR:Q91W98"/>
<dbReference type="Proteomes" id="UP000000589">
    <property type="component" value="Chromosome 5"/>
</dbReference>
<dbReference type="RNAct" id="Q91W98">
    <property type="molecule type" value="protein"/>
</dbReference>
<dbReference type="Bgee" id="ENSMUSG00000029416">
    <property type="expression patterns" value="Expressed in spermatocyte and 251 other cell types or tissues"/>
</dbReference>
<dbReference type="ExpressionAtlas" id="Q91W98">
    <property type="expression patterns" value="baseline and differential"/>
</dbReference>
<dbReference type="GO" id="GO:0031901">
    <property type="term" value="C:early endosome membrane"/>
    <property type="evidence" value="ECO:0000314"/>
    <property type="project" value="UniProtKB"/>
</dbReference>
<dbReference type="GO" id="GO:0036020">
    <property type="term" value="C:endolysosome membrane"/>
    <property type="evidence" value="ECO:0000250"/>
    <property type="project" value="UniProtKB"/>
</dbReference>
<dbReference type="GO" id="GO:0010008">
    <property type="term" value="C:endosome membrane"/>
    <property type="evidence" value="ECO:0000314"/>
    <property type="project" value="UniProtKB"/>
</dbReference>
<dbReference type="GO" id="GO:0005765">
    <property type="term" value="C:lysosomal membrane"/>
    <property type="evidence" value="ECO:0000314"/>
    <property type="project" value="UniProtKB"/>
</dbReference>
<dbReference type="GO" id="GO:0071916">
    <property type="term" value="F:dipeptide transmembrane transporter activity"/>
    <property type="evidence" value="ECO:0000250"/>
    <property type="project" value="UniProtKB"/>
</dbReference>
<dbReference type="GO" id="GO:0005290">
    <property type="term" value="F:L-histidine transmembrane transporter activity"/>
    <property type="evidence" value="ECO:0000314"/>
    <property type="project" value="UniProtKB"/>
</dbReference>
<dbReference type="GO" id="GO:0015333">
    <property type="term" value="F:peptide:proton symporter activity"/>
    <property type="evidence" value="ECO:0000315"/>
    <property type="project" value="UniProtKB"/>
</dbReference>
<dbReference type="GO" id="GO:0015647">
    <property type="term" value="F:peptidoglycan transmembrane transporter activity"/>
    <property type="evidence" value="ECO:0000250"/>
    <property type="project" value="UniProtKB"/>
</dbReference>
<dbReference type="GO" id="GO:0140206">
    <property type="term" value="P:dipeptide import across plasma membrane"/>
    <property type="evidence" value="ECO:0000250"/>
    <property type="project" value="UniProtKB"/>
</dbReference>
<dbReference type="GO" id="GO:0045087">
    <property type="term" value="P:innate immune response"/>
    <property type="evidence" value="ECO:0007669"/>
    <property type="project" value="UniProtKB-KW"/>
</dbReference>
<dbReference type="GO" id="GO:0089708">
    <property type="term" value="P:L-histidine transmembrane export from vacuole"/>
    <property type="evidence" value="ECO:0000315"/>
    <property type="project" value="UniProtKB"/>
</dbReference>
<dbReference type="GO" id="GO:0033023">
    <property type="term" value="P:mast cell homeostasis"/>
    <property type="evidence" value="ECO:0000315"/>
    <property type="project" value="UniProtKB"/>
</dbReference>
<dbReference type="GO" id="GO:0015835">
    <property type="term" value="P:peptidoglycan transport"/>
    <property type="evidence" value="ECO:0000314"/>
    <property type="project" value="UniProtKB"/>
</dbReference>
<dbReference type="GO" id="GO:0045089">
    <property type="term" value="P:positive regulation of innate immune response"/>
    <property type="evidence" value="ECO:0000250"/>
    <property type="project" value="UniProtKB"/>
</dbReference>
<dbReference type="GO" id="GO:0070430">
    <property type="term" value="P:positive regulation of nucleotide-binding oligomerization domain containing 1 signaling pathway"/>
    <property type="evidence" value="ECO:0000315"/>
    <property type="project" value="UniProtKB"/>
</dbReference>
<dbReference type="GO" id="GO:0070434">
    <property type="term" value="P:positive regulation of nucleotide-binding oligomerization domain containing 2 signaling pathway"/>
    <property type="evidence" value="ECO:0000314"/>
    <property type="project" value="UniProtKB"/>
</dbReference>
<dbReference type="GO" id="GO:0034157">
    <property type="term" value="P:positive regulation of toll-like receptor 7 signaling pathway"/>
    <property type="evidence" value="ECO:0000315"/>
    <property type="project" value="UniProtKB"/>
</dbReference>
<dbReference type="GO" id="GO:0034161">
    <property type="term" value="P:positive regulation of toll-like receptor 8 signaling pathway"/>
    <property type="evidence" value="ECO:0007669"/>
    <property type="project" value="Ensembl"/>
</dbReference>
<dbReference type="GO" id="GO:0034165">
    <property type="term" value="P:positive regulation of toll-like receptor 9 signaling pathway"/>
    <property type="evidence" value="ECO:0000315"/>
    <property type="project" value="UniProtKB"/>
</dbReference>
<dbReference type="GO" id="GO:0015031">
    <property type="term" value="P:protein transport"/>
    <property type="evidence" value="ECO:0007669"/>
    <property type="project" value="UniProtKB-KW"/>
</dbReference>
<dbReference type="GO" id="GO:0048302">
    <property type="term" value="P:regulation of isotype switching to IgG isotypes"/>
    <property type="evidence" value="ECO:0000315"/>
    <property type="project" value="UniProtKB"/>
</dbReference>
<dbReference type="GO" id="GO:0070424">
    <property type="term" value="P:regulation of nucleotide-binding domain, leucine rich repeat containing receptor signaling pathway"/>
    <property type="evidence" value="ECO:0000315"/>
    <property type="project" value="UniProtKB"/>
</dbReference>
<dbReference type="CDD" id="cd17348">
    <property type="entry name" value="MFS_SLC15A3_4"/>
    <property type="match status" value="1"/>
</dbReference>
<dbReference type="FunFam" id="1.20.1250.20:FF:000212">
    <property type="entry name" value="Solute carrier family 15 member 4"/>
    <property type="match status" value="1"/>
</dbReference>
<dbReference type="Gene3D" id="1.20.1250.20">
    <property type="entry name" value="MFS general substrate transporter like domains"/>
    <property type="match status" value="1"/>
</dbReference>
<dbReference type="InterPro" id="IPR036259">
    <property type="entry name" value="MFS_trans_sf"/>
</dbReference>
<dbReference type="InterPro" id="IPR000109">
    <property type="entry name" value="POT_fam"/>
</dbReference>
<dbReference type="InterPro" id="IPR018456">
    <property type="entry name" value="PTR2_symporter_CS"/>
</dbReference>
<dbReference type="PANTHER" id="PTHR11654">
    <property type="entry name" value="OLIGOPEPTIDE TRANSPORTER-RELATED"/>
    <property type="match status" value="1"/>
</dbReference>
<dbReference type="Pfam" id="PF00854">
    <property type="entry name" value="PTR2"/>
    <property type="match status" value="1"/>
</dbReference>
<dbReference type="SUPFAM" id="SSF103473">
    <property type="entry name" value="MFS general substrate transporter"/>
    <property type="match status" value="1"/>
</dbReference>
<dbReference type="PROSITE" id="PS01023">
    <property type="entry name" value="PTR2_2"/>
    <property type="match status" value="1"/>
</dbReference>